<reference key="1">
    <citation type="journal article" date="1998" name="FEMS Microbiol. Lett.">
        <title>Cloning and expression of the gene encoding RNA polymerase alpha subunit from alkaliphilic Bacillus sp. strain C-125.</title>
        <authorList>
            <person name="Nakasone K."/>
            <person name="Takaki Y."/>
            <person name="Takami H."/>
            <person name="Inoue A."/>
            <person name="Horikoshi K."/>
        </authorList>
    </citation>
    <scope>NUCLEOTIDE SEQUENCE [GENOMIC DNA]</scope>
    <source>
        <strain>ATCC BAA-125 / DSM 18197 / FERM 7344 / JCM 9153 / C-125</strain>
    </source>
</reference>
<reference key="2">
    <citation type="journal article" date="1999" name="Biosci. Biotechnol. Biochem.">
        <title>Sequence analysis of a 32-kb region including the major ribosomal protein gene clusters from alkaliphilic Bacillus sp. strain C-125.</title>
        <authorList>
            <person name="Takami H."/>
            <person name="Takaki Y."/>
            <person name="Nakasone K."/>
            <person name="Hirama C."/>
            <person name="Inoue A."/>
            <person name="Horikoshi K."/>
        </authorList>
    </citation>
    <scope>NUCLEOTIDE SEQUENCE [GENOMIC DNA]</scope>
    <source>
        <strain>ATCC BAA-125 / DSM 18197 / FERM 7344 / JCM 9153 / C-125</strain>
    </source>
</reference>
<reference key="3">
    <citation type="journal article" date="2000" name="Nucleic Acids Res.">
        <title>Complete genome sequence of the alkaliphilic bacterium Bacillus halodurans and genomic sequence comparison with Bacillus subtilis.</title>
        <authorList>
            <person name="Takami H."/>
            <person name="Nakasone K."/>
            <person name="Takaki Y."/>
            <person name="Maeno G."/>
            <person name="Sasaki R."/>
            <person name="Masui N."/>
            <person name="Fuji F."/>
            <person name="Hirama C."/>
            <person name="Nakamura Y."/>
            <person name="Ogasawara N."/>
            <person name="Kuhara S."/>
            <person name="Horikoshi K."/>
        </authorList>
    </citation>
    <scope>NUCLEOTIDE SEQUENCE [LARGE SCALE GENOMIC DNA]</scope>
    <source>
        <strain>ATCC BAA-125 / DSM 18197 / FERM 7344 / JCM 9153 / C-125</strain>
    </source>
</reference>
<accession>O50633</accession>
<accession>Q9JPW4</accession>
<proteinExistence type="inferred from homology"/>
<dbReference type="EMBL" id="AB010082">
    <property type="protein sequence ID" value="BAA24193.1"/>
    <property type="molecule type" value="Genomic_DNA"/>
</dbReference>
<dbReference type="EMBL" id="AB017508">
    <property type="protein sequence ID" value="BAA75297.1"/>
    <property type="molecule type" value="Genomic_DNA"/>
</dbReference>
<dbReference type="EMBL" id="BA000004">
    <property type="protein sequence ID" value="BAB03880.1"/>
    <property type="molecule type" value="Genomic_DNA"/>
</dbReference>
<dbReference type="PIR" id="T44409">
    <property type="entry name" value="T44409"/>
</dbReference>
<dbReference type="RefSeq" id="WP_010896343.1">
    <property type="nucleotide sequence ID" value="NC_002570.2"/>
</dbReference>
<dbReference type="SMR" id="O50633"/>
<dbReference type="STRING" id="272558.gene:10726001"/>
<dbReference type="GeneID" id="87595702"/>
<dbReference type="KEGG" id="bha:BH0161"/>
<dbReference type="eggNOG" id="COG0100">
    <property type="taxonomic scope" value="Bacteria"/>
</dbReference>
<dbReference type="HOGENOM" id="CLU_072439_5_0_9"/>
<dbReference type="OrthoDB" id="9806415at2"/>
<dbReference type="Proteomes" id="UP000001258">
    <property type="component" value="Chromosome"/>
</dbReference>
<dbReference type="GO" id="GO:1990904">
    <property type="term" value="C:ribonucleoprotein complex"/>
    <property type="evidence" value="ECO:0007669"/>
    <property type="project" value="UniProtKB-KW"/>
</dbReference>
<dbReference type="GO" id="GO:0005840">
    <property type="term" value="C:ribosome"/>
    <property type="evidence" value="ECO:0007669"/>
    <property type="project" value="UniProtKB-KW"/>
</dbReference>
<dbReference type="GO" id="GO:0019843">
    <property type="term" value="F:rRNA binding"/>
    <property type="evidence" value="ECO:0007669"/>
    <property type="project" value="UniProtKB-UniRule"/>
</dbReference>
<dbReference type="GO" id="GO:0003735">
    <property type="term" value="F:structural constituent of ribosome"/>
    <property type="evidence" value="ECO:0007669"/>
    <property type="project" value="InterPro"/>
</dbReference>
<dbReference type="GO" id="GO:0006412">
    <property type="term" value="P:translation"/>
    <property type="evidence" value="ECO:0007669"/>
    <property type="project" value="UniProtKB-UniRule"/>
</dbReference>
<dbReference type="FunFam" id="3.30.420.80:FF:000001">
    <property type="entry name" value="30S ribosomal protein S11"/>
    <property type="match status" value="1"/>
</dbReference>
<dbReference type="Gene3D" id="3.30.420.80">
    <property type="entry name" value="Ribosomal protein S11"/>
    <property type="match status" value="1"/>
</dbReference>
<dbReference type="HAMAP" id="MF_01310">
    <property type="entry name" value="Ribosomal_uS11"/>
    <property type="match status" value="1"/>
</dbReference>
<dbReference type="InterPro" id="IPR001971">
    <property type="entry name" value="Ribosomal_uS11"/>
</dbReference>
<dbReference type="InterPro" id="IPR019981">
    <property type="entry name" value="Ribosomal_uS11_bac-type"/>
</dbReference>
<dbReference type="InterPro" id="IPR018102">
    <property type="entry name" value="Ribosomal_uS11_CS"/>
</dbReference>
<dbReference type="InterPro" id="IPR036967">
    <property type="entry name" value="Ribosomal_uS11_sf"/>
</dbReference>
<dbReference type="NCBIfam" id="NF003698">
    <property type="entry name" value="PRK05309.1"/>
    <property type="match status" value="1"/>
</dbReference>
<dbReference type="NCBIfam" id="TIGR03632">
    <property type="entry name" value="uS11_bact"/>
    <property type="match status" value="1"/>
</dbReference>
<dbReference type="PANTHER" id="PTHR11759">
    <property type="entry name" value="40S RIBOSOMAL PROTEIN S14/30S RIBOSOMAL PROTEIN S11"/>
    <property type="match status" value="1"/>
</dbReference>
<dbReference type="Pfam" id="PF00411">
    <property type="entry name" value="Ribosomal_S11"/>
    <property type="match status" value="1"/>
</dbReference>
<dbReference type="PIRSF" id="PIRSF002131">
    <property type="entry name" value="Ribosomal_S11"/>
    <property type="match status" value="1"/>
</dbReference>
<dbReference type="SUPFAM" id="SSF53137">
    <property type="entry name" value="Translational machinery components"/>
    <property type="match status" value="1"/>
</dbReference>
<dbReference type="PROSITE" id="PS00054">
    <property type="entry name" value="RIBOSOMAL_S11"/>
    <property type="match status" value="1"/>
</dbReference>
<feature type="chain" id="PRO_0000123101" description="Small ribosomal subunit protein uS11">
    <location>
        <begin position="1"/>
        <end position="129"/>
    </location>
</feature>
<protein>
    <recommendedName>
        <fullName evidence="1">Small ribosomal subunit protein uS11</fullName>
    </recommendedName>
    <alternativeName>
        <fullName evidence="2">30S ribosomal protein S11</fullName>
    </alternativeName>
</protein>
<evidence type="ECO:0000255" key="1">
    <source>
        <dbReference type="HAMAP-Rule" id="MF_01310"/>
    </source>
</evidence>
<evidence type="ECO:0000305" key="2"/>
<sequence>MAKKTNTRKRRQRKNVETGVAHIRSTFNNTIVTITDPHGNAISWASAGALGFKGSRKSTPFAAQMAAETAAKAAMEHGMKSIEVSVKGPGAGREAAIRSLQAVGLEVNMIKDVTPVPHNGCRPPKRRRV</sequence>
<gene>
    <name evidence="1" type="primary">rpsK</name>
    <name type="ordered locus">BH0161</name>
</gene>
<keyword id="KW-1185">Reference proteome</keyword>
<keyword id="KW-0687">Ribonucleoprotein</keyword>
<keyword id="KW-0689">Ribosomal protein</keyword>
<keyword id="KW-0694">RNA-binding</keyword>
<keyword id="KW-0699">rRNA-binding</keyword>
<name>RS11_HALH5</name>
<organism>
    <name type="scientific">Halalkalibacterium halodurans (strain ATCC BAA-125 / DSM 18197 / FERM 7344 / JCM 9153 / C-125)</name>
    <name type="common">Bacillus halodurans</name>
    <dbReference type="NCBI Taxonomy" id="272558"/>
    <lineage>
        <taxon>Bacteria</taxon>
        <taxon>Bacillati</taxon>
        <taxon>Bacillota</taxon>
        <taxon>Bacilli</taxon>
        <taxon>Bacillales</taxon>
        <taxon>Bacillaceae</taxon>
        <taxon>Halalkalibacterium (ex Joshi et al. 2022)</taxon>
    </lineage>
</organism>
<comment type="function">
    <text evidence="1">Located on the platform of the 30S subunit, it bridges several disparate RNA helices of the 16S rRNA. Forms part of the Shine-Dalgarno cleft in the 70S ribosome.</text>
</comment>
<comment type="subunit">
    <text evidence="1">Part of the 30S ribosomal subunit. Interacts with proteins S7 and S18. Binds to IF-3.</text>
</comment>
<comment type="similarity">
    <text evidence="1">Belongs to the universal ribosomal protein uS11 family.</text>
</comment>